<dbReference type="EMBL" id="X17096">
    <property type="protein sequence ID" value="CAA34955.1"/>
    <property type="molecule type" value="Genomic_DNA"/>
</dbReference>
<dbReference type="PIR" id="S07596">
    <property type="entry name" value="S07596"/>
</dbReference>
<dbReference type="SMR" id="P14971"/>
<dbReference type="Proteomes" id="UP000008453">
    <property type="component" value="Genome"/>
</dbReference>
<dbReference type="GO" id="GO:0044167">
    <property type="term" value="C:host cell endoplasmic reticulum membrane"/>
    <property type="evidence" value="ECO:0007669"/>
    <property type="project" value="UniProtKB-SubCell"/>
</dbReference>
<dbReference type="GO" id="GO:0020002">
    <property type="term" value="C:host cell plasma membrane"/>
    <property type="evidence" value="ECO:0007669"/>
    <property type="project" value="UniProtKB-SubCell"/>
</dbReference>
<dbReference type="GO" id="GO:0016020">
    <property type="term" value="C:membrane"/>
    <property type="evidence" value="ECO:0007669"/>
    <property type="project" value="UniProtKB-KW"/>
</dbReference>
<dbReference type="GO" id="GO:0003677">
    <property type="term" value="F:DNA binding"/>
    <property type="evidence" value="ECO:0007669"/>
    <property type="project" value="UniProtKB-KW"/>
</dbReference>
<dbReference type="GO" id="GO:0046740">
    <property type="term" value="P:transport of virus in host, cell to cell"/>
    <property type="evidence" value="ECO:0007669"/>
    <property type="project" value="UniProtKB-KW"/>
</dbReference>
<dbReference type="InterPro" id="IPR000211">
    <property type="entry name" value="Gemini_BL"/>
</dbReference>
<dbReference type="Pfam" id="PF00845">
    <property type="entry name" value="Gemini_BL1"/>
    <property type="match status" value="1"/>
</dbReference>
<reference key="1">
    <citation type="journal article" date="1990" name="Nucleic Acids Res.">
        <title>Nucleotide sequence of the infectious cloned DNA components of African cassava mosaic virus (Nigerian strain).</title>
        <authorList>
            <person name="Morris B."/>
            <person name="Coates L."/>
            <person name="Lowe S."/>
            <person name="Richardson K."/>
            <person name="Eddy P."/>
        </authorList>
    </citation>
    <scope>NUCLEOTIDE SEQUENCE [GENOMIC DNA]</scope>
</reference>
<keyword id="KW-0238">DNA-binding</keyword>
<keyword id="KW-1032">Host cell membrane</keyword>
<keyword id="KW-1038">Host endoplasmic reticulum</keyword>
<keyword id="KW-1043">Host membrane</keyword>
<keyword id="KW-1044">Host microsome</keyword>
<keyword id="KW-0472">Membrane</keyword>
<keyword id="KW-0597">Phosphoprotein</keyword>
<keyword id="KW-1185">Reference proteome</keyword>
<keyword id="KW-0813">Transport</keyword>
<keyword id="KW-0916">Viral movement protein</keyword>
<evidence type="ECO:0000250" key="1"/>
<evidence type="ECO:0000256" key="2">
    <source>
        <dbReference type="SAM" id="MobiDB-lite"/>
    </source>
</evidence>
<evidence type="ECO:0000305" key="3"/>
<feature type="chain" id="PRO_0000222254" description="Movement protein BC1">
    <location>
        <begin position="1"/>
        <end position="298"/>
    </location>
</feature>
<feature type="region of interest" description="Disordered" evidence="2">
    <location>
        <begin position="253"/>
        <end position="273"/>
    </location>
</feature>
<organismHost>
    <name type="scientific">Hewittia sublobata</name>
    <dbReference type="NCBI Taxonomy" id="197394"/>
</organismHost>
<organismHost>
    <name type="scientific">Jatropha multifida</name>
    <name type="common">Coralbush</name>
    <dbReference type="NCBI Taxonomy" id="3996"/>
</organismHost>
<organismHost>
    <name type="scientific">Laportea</name>
    <dbReference type="NCBI Taxonomy" id="194268"/>
</organismHost>
<organismHost>
    <name type="scientific">Manihot esculenta</name>
    <name type="common">Cassava</name>
    <name type="synonym">Jatropha manihot</name>
    <dbReference type="NCBI Taxonomy" id="3983"/>
</organismHost>
<gene>
    <name type="ORF">BC1</name>
    <name type="ORF">BL1</name>
</gene>
<sequence length="298" mass="33648">MDTSVPVISSDYIQSARTEYKLTNDESPITLQFPSTLERTRVRIMGKCMKVDHVVIEYRNQVPFNAQGSVIVTIRDTRLSDEQQDQAQFTFPIGCNVDLHYFSASYFSIDDNVPWQLLYKVEDSNVKNGVTFAQIKAKLKLSAAKHSTDIRFKQPTIKILSKDYGPDCVDFWSVGKPKPIRRLIQNEPGTDYDTGPKYRPITVQPGETWATKSTIGRSTSMRYTSPKQIDIDDSSSKQYASEAEFPLRGLHQLPEASLDPGDSVSQTQSMTKKDIESIIEQTVNKCLIAHRGSSHKDL</sequence>
<comment type="function">
    <text evidence="1">Transports viral genome to neighboring plant cells directly through plasmosdesmata, without any budding. The movement protein allows efficient cell to cell propagation, by bypassing the host cell wall barrier. Begomovirus genome is shuttled out of nucleus by Nuclear shuttle protein (NSP) and the movement protein transports the DNA-NSP complex to cell plasmodesmata and facilitates further movement across the cell wall (By similarity).</text>
</comment>
<comment type="subunit">
    <text evidence="1">Binds to dimeric supercoiled plasmid DNA.</text>
</comment>
<comment type="subcellular location">
    <subcellularLocation>
        <location evidence="1">Host cell membrane</location>
        <topology evidence="1">Peripheral membrane protein</topology>
        <orientation evidence="1">Cytoplasmic side</orientation>
    </subcellularLocation>
    <subcellularLocation>
        <location evidence="1">Host microsome membrane</location>
        <topology evidence="1">Peripheral membrane protein</topology>
        <orientation evidence="1">Cytoplasmic side</orientation>
    </subcellularLocation>
    <subcellularLocation>
        <location evidence="1">Host endoplasmic reticulum membrane</location>
        <topology evidence="1">Peripheral membrane protein</topology>
        <orientation evidence="1">Cytoplasmic side</orientation>
    </subcellularLocation>
    <text evidence="1">Found on ER-derived vesicles.</text>
</comment>
<comment type="PTM">
    <text evidence="1">Phosphorylated.</text>
</comment>
<comment type="similarity">
    <text evidence="3">Belongs to the begomovirus movement protein BC1 family.</text>
</comment>
<accession>P14971</accession>
<organism>
    <name type="scientific">African cassava mosaic virus (isolate Nigerian)</name>
    <name type="common">ACMV</name>
    <name type="synonym">Cassava latent virus (isolate Nigerian)</name>
    <dbReference type="NCBI Taxonomy" id="222073"/>
    <lineage>
        <taxon>Viruses</taxon>
        <taxon>Monodnaviria</taxon>
        <taxon>Shotokuvirae</taxon>
        <taxon>Cressdnaviricota</taxon>
        <taxon>Repensiviricetes</taxon>
        <taxon>Geplafuvirales</taxon>
        <taxon>Geminiviridae</taxon>
        <taxon>Begomovirus</taxon>
        <taxon>Begomovirus manihotis</taxon>
    </lineage>
</organism>
<proteinExistence type="inferred from homology"/>
<protein>
    <recommendedName>
        <fullName>Movement protein BC1</fullName>
    </recommendedName>
    <alternativeName>
        <fullName>33.7 kDa protein</fullName>
    </alternativeName>
    <alternativeName>
        <fullName>Movement protein BL1</fullName>
    </alternativeName>
</protein>
<name>MVP_CLVN</name>